<proteinExistence type="evidence at protein level"/>
<keyword id="KW-0002">3D-structure</keyword>
<keyword id="KW-0007">Acetylation</keyword>
<keyword id="KW-0025">Alternative splicing</keyword>
<keyword id="KW-0963">Cytoplasm</keyword>
<keyword id="KW-0903">Direct protein sequencing</keyword>
<keyword id="KW-1017">Isopeptide bond</keyword>
<keyword id="KW-0539">Nucleus</keyword>
<keyword id="KW-0597">Phosphoprotein</keyword>
<keyword id="KW-1267">Proteomics identification</keyword>
<keyword id="KW-1185">Reference proteome</keyword>
<keyword id="KW-0677">Repeat</keyword>
<keyword id="KW-0802">TPR repeat</keyword>
<keyword id="KW-0832">Ubl conjugation</keyword>
<keyword id="KW-0833">Ubl conjugation pathway</keyword>
<sequence length="365" mass="41024">MAAAAAGTATSQRFFQSFSDALIDEDPQAALEELTKALEQKPDDAQYYCQRAYCHILLGNYCVAVADAKKSLELNPNNSTAMLRKGICEYHEKNYAAALETFTEGQKLDIETGFHRVGQAGLQLLTSSDPPALDSQSAGITGADANFSVWIKRCQEAQNGSESEVWTHQSKIKYDWYQTESQVVITLMIKNVQKNDVNVEFSEKELSALVKLPSGEDYNLKLELLHPIIPEQSTFKVLSTKIEIKLKKPEAVRWEKLEGQGDVPTPKQFVADVKNLYPSSSPYTRNWDKLVGEIKEEEKNEKLEGDAALNRLFQQIYSDGSDEVKRAMNKSFMESGGTVLSTNWSDVGKRKVEINPPDDMEWKKY</sequence>
<protein>
    <recommendedName>
        <fullName evidence="1">Protein SGT1 homolog</fullName>
    </recommendedName>
    <alternativeName>
        <fullName evidence="17">Protein 40-6-3</fullName>
    </alternativeName>
    <alternativeName>
        <fullName evidence="10">Sgt1</fullName>
    </alternativeName>
    <alternativeName>
        <fullName evidence="1">Suppressor of G2 allele of SKP1 homolog</fullName>
    </alternativeName>
</protein>
<feature type="initiator methionine" description="Removed" evidence="5 9 19 20 21 22 26">
    <location>
        <position position="1"/>
    </location>
</feature>
<feature type="chain" id="PRO_0000106332" description="Protein SGT1 homolog">
    <location>
        <begin position="2"/>
        <end position="365"/>
    </location>
</feature>
<feature type="repeat" description="TPR 1">
    <location>
        <begin position="11"/>
        <end position="44"/>
    </location>
</feature>
<feature type="repeat" description="TPR 2">
    <location>
        <begin position="45"/>
        <end position="78"/>
    </location>
</feature>
<feature type="repeat" description="TPR 3">
    <location>
        <begin position="79"/>
        <end position="112"/>
    </location>
</feature>
<feature type="domain" description="CS" evidence="3">
    <location>
        <begin position="169"/>
        <end position="258"/>
    </location>
</feature>
<feature type="domain" description="SGS" evidence="2">
    <location>
        <begin position="276"/>
        <end position="365"/>
    </location>
</feature>
<feature type="modified residue" description="N-acetylalanine" evidence="9 19 20 21 22 26">
    <location>
        <position position="2"/>
    </location>
</feature>
<feature type="modified residue" description="Phosphothreonine" evidence="20 23">
    <location>
        <position position="265"/>
    </location>
</feature>
<feature type="modified residue" description="Phosphoserine" evidence="8">
    <location>
        <position position="281"/>
    </location>
</feature>
<feature type="modified residue" description="Phosphothreonine" evidence="23">
    <location>
        <position position="284"/>
    </location>
</feature>
<feature type="modified residue" description="Phosphoserine" evidence="8 20">
    <location>
        <position position="331"/>
    </location>
</feature>
<feature type="cross-link" description="Glycyl lysine isopeptide (Lys-Gly) (interchain with G-Cter in SUMO1); alternate" evidence="24">
    <location>
        <position position="295"/>
    </location>
</feature>
<feature type="cross-link" description="Glycyl lysine isopeptide (Lys-Gly) (interchain with G-Cter in SUMO2); alternate" evidence="25 27">
    <location>
        <position position="295"/>
    </location>
</feature>
<feature type="splice variant" id="VSP_013420" description="In isoform 2." evidence="10 13 14 15">
    <original>IETGFHRVGQAGLQLLTSSDPPALDSQSAGITG</original>
    <variation>S</variation>
    <location>
        <begin position="110"/>
        <end position="142"/>
    </location>
</feature>
<feature type="sequence conflict" description="In Ref. 3; AAQ01749." evidence="16" ref="3">
    <original>A</original>
    <variation>V</variation>
    <location>
        <position position="120"/>
    </location>
</feature>
<feature type="strand" evidence="28">
    <location>
        <begin position="174"/>
        <end position="178"/>
    </location>
</feature>
<feature type="strand" evidence="28">
    <location>
        <begin position="180"/>
        <end position="187"/>
    </location>
</feature>
<feature type="helix" evidence="28">
    <location>
        <begin position="194"/>
        <end position="196"/>
    </location>
</feature>
<feature type="strand" evidence="28">
    <location>
        <begin position="197"/>
        <end position="200"/>
    </location>
</feature>
<feature type="strand" evidence="28">
    <location>
        <begin position="202"/>
        <end position="204"/>
    </location>
</feature>
<feature type="strand" evidence="28">
    <location>
        <begin position="206"/>
        <end position="211"/>
    </location>
</feature>
<feature type="strand" evidence="28">
    <location>
        <begin position="215"/>
        <end position="222"/>
    </location>
</feature>
<feature type="strand" evidence="28">
    <location>
        <begin position="224"/>
        <end position="226"/>
    </location>
</feature>
<feature type="helix" evidence="28">
    <location>
        <begin position="230"/>
        <end position="232"/>
    </location>
</feature>
<feature type="strand" evidence="28">
    <location>
        <begin position="233"/>
        <end position="237"/>
    </location>
</feature>
<feature type="strand" evidence="28">
    <location>
        <begin position="239"/>
        <end position="247"/>
    </location>
</feature>
<feature type="strand" evidence="28">
    <location>
        <begin position="255"/>
        <end position="258"/>
    </location>
</feature>
<dbReference type="EMBL" id="AF132856">
    <property type="protein sequence ID" value="AAD30062.1"/>
    <property type="molecule type" value="mRNA"/>
</dbReference>
<dbReference type="EMBL" id="AJ344097">
    <property type="protein sequence ID" value="CAC51433.1"/>
    <property type="molecule type" value="mRNA"/>
</dbReference>
<dbReference type="EMBL" id="AY321358">
    <property type="protein sequence ID" value="AAQ76039.1"/>
    <property type="molecule type" value="mRNA"/>
</dbReference>
<dbReference type="EMBL" id="AY271314">
    <property type="protein sequence ID" value="AAQ01749.1"/>
    <property type="molecule type" value="mRNA"/>
</dbReference>
<dbReference type="EMBL" id="BT009798">
    <property type="protein sequence ID" value="AAP88800.1"/>
    <property type="molecule type" value="mRNA"/>
</dbReference>
<dbReference type="EMBL" id="AL139089">
    <property type="status" value="NOT_ANNOTATED_CDS"/>
    <property type="molecule type" value="Genomic_DNA"/>
</dbReference>
<dbReference type="EMBL" id="CH471124">
    <property type="protein sequence ID" value="EAW52045.1"/>
    <property type="molecule type" value="Genomic_DNA"/>
</dbReference>
<dbReference type="EMBL" id="BC000911">
    <property type="protein sequence ID" value="AAH00911.1"/>
    <property type="molecule type" value="mRNA"/>
</dbReference>
<dbReference type="CCDS" id="CCDS45050.1">
    <molecule id="Q9Y2Z0-1"/>
</dbReference>
<dbReference type="CCDS" id="CCDS9436.1">
    <molecule id="Q9Y2Z0-2"/>
</dbReference>
<dbReference type="RefSeq" id="NP_001124384.1">
    <molecule id="Q9Y2Z0-1"/>
    <property type="nucleotide sequence ID" value="NM_001130912.3"/>
</dbReference>
<dbReference type="RefSeq" id="NP_001307760.1">
    <property type="nucleotide sequence ID" value="NM_001320831.1"/>
</dbReference>
<dbReference type="RefSeq" id="NP_006695.1">
    <molecule id="Q9Y2Z0-2"/>
    <property type="nucleotide sequence ID" value="NM_006704.5"/>
</dbReference>
<dbReference type="PDB" id="1RL1">
    <property type="method" value="NMR"/>
    <property type="chains" value="A=167-276"/>
</dbReference>
<dbReference type="PDBsum" id="1RL1"/>
<dbReference type="BMRB" id="Q9Y2Z0"/>
<dbReference type="SMR" id="Q9Y2Z0"/>
<dbReference type="BioGRID" id="116115">
    <property type="interactions" value="303"/>
</dbReference>
<dbReference type="DIP" id="DIP-53799N"/>
<dbReference type="FunCoup" id="Q9Y2Z0">
    <property type="interactions" value="2975"/>
</dbReference>
<dbReference type="IntAct" id="Q9Y2Z0">
    <property type="interactions" value="168"/>
</dbReference>
<dbReference type="MINT" id="Q9Y2Z0"/>
<dbReference type="STRING" id="9606.ENSP00000367208"/>
<dbReference type="GlyConnect" id="638">
    <property type="glycosylation" value="1 N-Linked glycan (1 site)"/>
</dbReference>
<dbReference type="GlyCosmos" id="Q9Y2Z0">
    <property type="glycosylation" value="1 site, 2 glycans"/>
</dbReference>
<dbReference type="GlyGen" id="Q9Y2Z0">
    <property type="glycosylation" value="2 sites, 1 N-linked glycan (1 site), 1 O-linked glycan (1 site)"/>
</dbReference>
<dbReference type="iPTMnet" id="Q9Y2Z0"/>
<dbReference type="MetOSite" id="Q9Y2Z0"/>
<dbReference type="PhosphoSitePlus" id="Q9Y2Z0"/>
<dbReference type="SwissPalm" id="Q9Y2Z0"/>
<dbReference type="BioMuta" id="SUGT1"/>
<dbReference type="DMDM" id="62512186"/>
<dbReference type="jPOST" id="Q9Y2Z0"/>
<dbReference type="MassIVE" id="Q9Y2Z0"/>
<dbReference type="PaxDb" id="9606-ENSP00000367208"/>
<dbReference type="PeptideAtlas" id="Q9Y2Z0"/>
<dbReference type="ProteomicsDB" id="85940">
    <molecule id="Q9Y2Z0-1"/>
</dbReference>
<dbReference type="ProteomicsDB" id="85941">
    <molecule id="Q9Y2Z0-2"/>
</dbReference>
<dbReference type="Pumba" id="Q9Y2Z0"/>
<dbReference type="Antibodypedia" id="24223">
    <property type="antibodies" value="263 antibodies from 31 providers"/>
</dbReference>
<dbReference type="DNASU" id="10910"/>
<dbReference type="Ensembl" id="ENST00000310528.9">
    <molecule id="Q9Y2Z0-2"/>
    <property type="protein sequence ID" value="ENSP00000308067.7"/>
    <property type="gene ID" value="ENSG00000165416.15"/>
</dbReference>
<dbReference type="Ensembl" id="ENST00000343788.10">
    <molecule id="Q9Y2Z0-1"/>
    <property type="protein sequence ID" value="ENSP00000367208.4"/>
    <property type="gene ID" value="ENSG00000165416.15"/>
</dbReference>
<dbReference type="GeneID" id="10910"/>
<dbReference type="KEGG" id="hsa:10910"/>
<dbReference type="MANE-Select" id="ENST00000310528.9">
    <molecule id="Q9Y2Z0-2"/>
    <property type="protein sequence ID" value="ENSP00000308067.7"/>
    <property type="RefSeq nucleotide sequence ID" value="NM_006704.5"/>
    <property type="RefSeq protein sequence ID" value="NP_006695.1"/>
</dbReference>
<dbReference type="UCSC" id="uc001vhb.3">
    <molecule id="Q9Y2Z0-1"/>
    <property type="organism name" value="human"/>
</dbReference>
<dbReference type="AGR" id="HGNC:16987"/>
<dbReference type="CTD" id="10910"/>
<dbReference type="DisGeNET" id="10910"/>
<dbReference type="GeneCards" id="SUGT1"/>
<dbReference type="HGNC" id="HGNC:16987">
    <property type="gene designation" value="SUGT1"/>
</dbReference>
<dbReference type="HPA" id="ENSG00000165416">
    <property type="expression patterns" value="Low tissue specificity"/>
</dbReference>
<dbReference type="MIM" id="604098">
    <property type="type" value="gene"/>
</dbReference>
<dbReference type="neXtProt" id="NX_Q9Y2Z0"/>
<dbReference type="OpenTargets" id="ENSG00000165416"/>
<dbReference type="PharmGKB" id="PA134880121"/>
<dbReference type="VEuPathDB" id="HostDB:ENSG00000165416"/>
<dbReference type="eggNOG" id="KOG0548">
    <property type="taxonomic scope" value="Eukaryota"/>
</dbReference>
<dbReference type="eggNOG" id="KOG1309">
    <property type="taxonomic scope" value="Eukaryota"/>
</dbReference>
<dbReference type="GeneTree" id="ENSGT00390000013700"/>
<dbReference type="HOGENOM" id="CLU_039532_1_1_1"/>
<dbReference type="InParanoid" id="Q9Y2Z0"/>
<dbReference type="OMA" id="WIKKCEE"/>
<dbReference type="OrthoDB" id="1898560at2759"/>
<dbReference type="PAN-GO" id="Q9Y2Z0">
    <property type="GO annotations" value="1 GO annotation based on evolutionary models"/>
</dbReference>
<dbReference type="PhylomeDB" id="Q9Y2Z0"/>
<dbReference type="TreeFam" id="TF105979"/>
<dbReference type="PathwayCommons" id="Q9Y2Z0"/>
<dbReference type="Reactome" id="R-HSA-844456">
    <property type="pathway name" value="The NLRP3 inflammasome"/>
</dbReference>
<dbReference type="Reactome" id="R-HSA-9660826">
    <property type="pathway name" value="Purinergic signaling in leishmaniasis infection"/>
</dbReference>
<dbReference type="SignaLink" id="Q9Y2Z0"/>
<dbReference type="SIGNOR" id="Q9Y2Z0"/>
<dbReference type="BioGRID-ORCS" id="10910">
    <property type="hits" value="471 hits in 1157 CRISPR screens"/>
</dbReference>
<dbReference type="CD-CODE" id="232F8A39">
    <property type="entry name" value="P-body"/>
</dbReference>
<dbReference type="CD-CODE" id="91857CE7">
    <property type="entry name" value="Nucleolus"/>
</dbReference>
<dbReference type="CD-CODE" id="DEE660B4">
    <property type="entry name" value="Stress granule"/>
</dbReference>
<dbReference type="ChiTaRS" id="SUGT1">
    <property type="organism name" value="human"/>
</dbReference>
<dbReference type="EvolutionaryTrace" id="Q9Y2Z0"/>
<dbReference type="GeneWiki" id="SUGT1"/>
<dbReference type="GenomeRNAi" id="10910"/>
<dbReference type="Pharos" id="Q9Y2Z0">
    <property type="development level" value="Tbio"/>
</dbReference>
<dbReference type="PRO" id="PR:Q9Y2Z0"/>
<dbReference type="Proteomes" id="UP000005640">
    <property type="component" value="Chromosome 13"/>
</dbReference>
<dbReference type="RNAct" id="Q9Y2Z0">
    <property type="molecule type" value="protein"/>
</dbReference>
<dbReference type="Bgee" id="ENSG00000165416">
    <property type="expression patterns" value="Expressed in kidney epithelium and 194 other cell types or tissues"/>
</dbReference>
<dbReference type="GO" id="GO:0005829">
    <property type="term" value="C:cytosol"/>
    <property type="evidence" value="ECO:0000314"/>
    <property type="project" value="HPA"/>
</dbReference>
<dbReference type="GO" id="GO:0000776">
    <property type="term" value="C:kinetochore"/>
    <property type="evidence" value="ECO:0000304"/>
    <property type="project" value="ProtInc"/>
</dbReference>
<dbReference type="GO" id="GO:0016604">
    <property type="term" value="C:nuclear body"/>
    <property type="evidence" value="ECO:0000314"/>
    <property type="project" value="HPA"/>
</dbReference>
<dbReference type="GO" id="GO:0032991">
    <property type="term" value="C:protein-containing complex"/>
    <property type="evidence" value="ECO:0000314"/>
    <property type="project" value="MGI"/>
</dbReference>
<dbReference type="GO" id="GO:0000151">
    <property type="term" value="C:ubiquitin ligase complex"/>
    <property type="evidence" value="ECO:0000304"/>
    <property type="project" value="ProtInc"/>
</dbReference>
<dbReference type="GO" id="GO:0106222">
    <property type="term" value="F:lncRNA binding"/>
    <property type="evidence" value="ECO:0007669"/>
    <property type="project" value="Ensembl"/>
</dbReference>
<dbReference type="GO" id="GO:0051087">
    <property type="term" value="F:protein-folding chaperone binding"/>
    <property type="evidence" value="ECO:0007669"/>
    <property type="project" value="InterPro"/>
</dbReference>
<dbReference type="GO" id="GO:0051382">
    <property type="term" value="P:kinetochore assembly"/>
    <property type="evidence" value="ECO:0000315"/>
    <property type="project" value="UniProtKB"/>
</dbReference>
<dbReference type="GO" id="GO:0031647">
    <property type="term" value="P:regulation of protein stability"/>
    <property type="evidence" value="ECO:0000314"/>
    <property type="project" value="AgBase"/>
</dbReference>
<dbReference type="GO" id="GO:0014841">
    <property type="term" value="P:skeletal muscle satellite cell proliferation"/>
    <property type="evidence" value="ECO:0007669"/>
    <property type="project" value="Ensembl"/>
</dbReference>
<dbReference type="GO" id="GO:0007051">
    <property type="term" value="P:spindle organization"/>
    <property type="evidence" value="ECO:0007669"/>
    <property type="project" value="Ensembl"/>
</dbReference>
<dbReference type="CDD" id="cd06489">
    <property type="entry name" value="p23_CS_hSgt1_like"/>
    <property type="match status" value="1"/>
</dbReference>
<dbReference type="DisProt" id="DP02834"/>
<dbReference type="FunFam" id="1.25.40.10:FF:000244">
    <property type="entry name" value="SGT1 homolog, MIS12 kinetochore complex assembly cochaperone"/>
    <property type="match status" value="1"/>
</dbReference>
<dbReference type="FunFam" id="2.60.40.790:FF:000012">
    <property type="entry name" value="SGT1 homolog, MIS12 kinetochore complex assembly cochaperone"/>
    <property type="match status" value="1"/>
</dbReference>
<dbReference type="Gene3D" id="2.60.40.790">
    <property type="match status" value="1"/>
</dbReference>
<dbReference type="Gene3D" id="1.25.40.10">
    <property type="entry name" value="Tetratricopeptide repeat domain"/>
    <property type="match status" value="1"/>
</dbReference>
<dbReference type="InterPro" id="IPR007052">
    <property type="entry name" value="CS_dom"/>
</dbReference>
<dbReference type="InterPro" id="IPR008978">
    <property type="entry name" value="HSP20-like_chaperone"/>
</dbReference>
<dbReference type="InterPro" id="IPR007699">
    <property type="entry name" value="SGS_dom"/>
</dbReference>
<dbReference type="InterPro" id="IPR044563">
    <property type="entry name" value="Sgt1-like"/>
</dbReference>
<dbReference type="InterPro" id="IPR011990">
    <property type="entry name" value="TPR-like_helical_dom_sf"/>
</dbReference>
<dbReference type="InterPro" id="IPR019734">
    <property type="entry name" value="TPR_rpt"/>
</dbReference>
<dbReference type="PANTHER" id="PTHR45862">
    <property type="entry name" value="PROTEIN SGT1 HOMOLOG"/>
    <property type="match status" value="1"/>
</dbReference>
<dbReference type="Pfam" id="PF04969">
    <property type="entry name" value="CS"/>
    <property type="match status" value="1"/>
</dbReference>
<dbReference type="Pfam" id="PF05002">
    <property type="entry name" value="SGS"/>
    <property type="match status" value="1"/>
</dbReference>
<dbReference type="Pfam" id="PF13432">
    <property type="entry name" value="TPR_16"/>
    <property type="match status" value="1"/>
</dbReference>
<dbReference type="PRINTS" id="PR02045">
    <property type="entry name" value="F138DOMAIN"/>
</dbReference>
<dbReference type="SMART" id="SM00028">
    <property type="entry name" value="TPR"/>
    <property type="match status" value="2"/>
</dbReference>
<dbReference type="SUPFAM" id="SSF49764">
    <property type="entry name" value="HSP20-like chaperones"/>
    <property type="match status" value="1"/>
</dbReference>
<dbReference type="SUPFAM" id="SSF48452">
    <property type="entry name" value="TPR-like"/>
    <property type="match status" value="1"/>
</dbReference>
<dbReference type="PROSITE" id="PS51203">
    <property type="entry name" value="CS"/>
    <property type="match status" value="1"/>
</dbReference>
<dbReference type="PROSITE" id="PS51048">
    <property type="entry name" value="SGS"/>
    <property type="match status" value="1"/>
</dbReference>
<dbReference type="PROSITE" id="PS50005">
    <property type="entry name" value="TPR"/>
    <property type="match status" value="3"/>
</dbReference>
<dbReference type="PROSITE" id="PS50293">
    <property type="entry name" value="TPR_REGION"/>
    <property type="match status" value="1"/>
</dbReference>
<organism>
    <name type="scientific">Homo sapiens</name>
    <name type="common">Human</name>
    <dbReference type="NCBI Taxonomy" id="9606"/>
    <lineage>
        <taxon>Eukaryota</taxon>
        <taxon>Metazoa</taxon>
        <taxon>Chordata</taxon>
        <taxon>Craniata</taxon>
        <taxon>Vertebrata</taxon>
        <taxon>Euteleostomi</taxon>
        <taxon>Mammalia</taxon>
        <taxon>Eutheria</taxon>
        <taxon>Euarchontoglires</taxon>
        <taxon>Primates</taxon>
        <taxon>Haplorrhini</taxon>
        <taxon>Catarrhini</taxon>
        <taxon>Hominidae</taxon>
        <taxon>Homo</taxon>
    </lineage>
</organism>
<accession>Q9Y2Z0</accession>
<accession>A2A303</accession>
<accession>Q5JAK5</accession>
<accession>Q5TAM6</accession>
<accession>Q6VXY6</accession>
<comment type="function">
    <text>May play a role in ubiquitination and subsequent proteasomal degradation of target proteins.</text>
</comment>
<comment type="subunit">
    <text evidence="4 6 7 8">Probably associates with SCF (SKP1-CUL1-F-box protein) complex through interaction with SKP1. Interacts with S100A6. Interacts with HSP90.</text>
</comment>
<comment type="interaction">
    <interactant intactId="EBI-307008">
        <id>Q9Y2Z0</id>
    </interactant>
    <interactant intactId="EBI-718707">
        <id>O75427</id>
        <label>LRCH4</label>
    </interactant>
    <organismsDiffer>false</organismsDiffer>
    <experiments>2</experiments>
</comment>
<comment type="interaction">
    <interactant intactId="EBI-307008">
        <id>Q9Y2Z0</id>
    </interactant>
    <interactant intactId="EBI-1051262">
        <id>Q9Y239</id>
        <label>NOD1</label>
    </interactant>
    <organismsDiffer>false</organismsDiffer>
    <experiments>5</experiments>
</comment>
<comment type="interaction">
    <interactant intactId="EBI-307008">
        <id>Q9Y2Z0</id>
    </interactant>
    <interactant intactId="EBI-10689860">
        <id>A0A0H3NF38</id>
        <label>sspH2</label>
    </interactant>
    <organismsDiffer>true</organismsDiffer>
    <experiments>7</experiments>
</comment>
<comment type="interaction">
    <interactant intactId="EBI-10768076">
        <id>Q9Y2Z0-2</id>
    </interactant>
    <interactant intactId="EBI-352572">
        <id>P08238</id>
        <label>HSP90AB1</label>
    </interactant>
    <organismsDiffer>false</organismsDiffer>
    <experiments>2</experiments>
</comment>
<comment type="interaction">
    <interactant intactId="EBI-10768076">
        <id>Q9Y2Z0-2</id>
    </interactant>
    <interactant intactId="EBI-307486">
        <id>P63208</id>
        <label>SKP1</label>
    </interactant>
    <organismsDiffer>false</organismsDiffer>
    <experiments>2</experiments>
</comment>
<comment type="interaction">
    <interactant intactId="EBI-10768076">
        <id>Q9Y2Z0-2</id>
    </interactant>
    <interactant intactId="EBI-10689860">
        <id>A0A0H3NF38</id>
        <label>sspH2</label>
    </interactant>
    <organismsDiffer>true</organismsDiffer>
    <experiments>2</experiments>
</comment>
<comment type="subcellular location">
    <subcellularLocation>
        <location evidence="8">Cytoplasm</location>
    </subcellularLocation>
    <subcellularLocation>
        <location evidence="8">Nucleus</location>
    </subcellularLocation>
    <text>Translocates to the nucleus upon heat shock, requiring S100A6.</text>
</comment>
<comment type="alternative products">
    <event type="alternative splicing"/>
    <isoform>
        <id>Q9Y2Z0-1</id>
        <name>1</name>
        <name evidence="11">SGT1B</name>
        <name evidence="11">SUGT1B</name>
        <name evidence="12">SGT1.2</name>
        <sequence type="displayed"/>
    </isoform>
    <isoform>
        <id>Q9Y2Z0-2</id>
        <name>2</name>
        <name>SGT1A</name>
        <name evidence="11">SUGT1A</name>
        <sequence type="described" ref="VSP_013420"/>
    </isoform>
</comment>
<comment type="domain">
    <text>The CS domain mediates interaction with HSP90.</text>
</comment>
<comment type="PTM">
    <text evidence="8">Phosphorylated at Ser-281 and Ser-331, dephosphorylation promotes nuclear translocation, most likely due to disruption of the SUGT1-HSP90 complex.</text>
</comment>
<comment type="similarity">
    <text evidence="16">Belongs to the SGT1 family.</text>
</comment>
<gene>
    <name evidence="18" type="primary">SUGT1</name>
</gene>
<name>SGT1_HUMAN</name>
<evidence type="ECO:0000250" key="1">
    <source>
        <dbReference type="UniProtKB" id="Q08446"/>
    </source>
</evidence>
<evidence type="ECO:0000255" key="2">
    <source>
        <dbReference type="PROSITE-ProRule" id="PRU00386"/>
    </source>
</evidence>
<evidence type="ECO:0000255" key="3">
    <source>
        <dbReference type="PROSITE-ProRule" id="PRU00547"/>
    </source>
</evidence>
<evidence type="ECO:0000269" key="4">
    <source>
    </source>
</evidence>
<evidence type="ECO:0000269" key="5">
    <source>
    </source>
</evidence>
<evidence type="ECO:0000269" key="6">
    <source>
    </source>
</evidence>
<evidence type="ECO:0000269" key="7">
    <source>
    </source>
</evidence>
<evidence type="ECO:0000269" key="8">
    <source>
    </source>
</evidence>
<evidence type="ECO:0000269" key="9">
    <source ref="10"/>
</evidence>
<evidence type="ECO:0000303" key="10">
    <source>
    </source>
</evidence>
<evidence type="ECO:0000303" key="11">
    <source>
    </source>
</evidence>
<evidence type="ECO:0000303" key="12">
    <source>
    </source>
</evidence>
<evidence type="ECO:0000303" key="13">
    <source>
    </source>
</evidence>
<evidence type="ECO:0000303" key="14">
    <source ref="4"/>
</evidence>
<evidence type="ECO:0000303" key="15">
    <source ref="5"/>
</evidence>
<evidence type="ECO:0000305" key="16"/>
<evidence type="ECO:0000312" key="17">
    <source>
        <dbReference type="EMBL" id="CAC51433.1"/>
    </source>
</evidence>
<evidence type="ECO:0000312" key="18">
    <source>
        <dbReference type="HGNC" id="HGNC:16987"/>
    </source>
</evidence>
<evidence type="ECO:0007744" key="19">
    <source>
    </source>
</evidence>
<evidence type="ECO:0007744" key="20">
    <source>
    </source>
</evidence>
<evidence type="ECO:0007744" key="21">
    <source>
    </source>
</evidence>
<evidence type="ECO:0007744" key="22">
    <source>
    </source>
</evidence>
<evidence type="ECO:0007744" key="23">
    <source>
    </source>
</evidence>
<evidence type="ECO:0007744" key="24">
    <source>
    </source>
</evidence>
<evidence type="ECO:0007744" key="25">
    <source>
    </source>
</evidence>
<evidence type="ECO:0007744" key="26">
    <source>
    </source>
</evidence>
<evidence type="ECO:0007744" key="27">
    <source>
    </source>
</evidence>
<evidence type="ECO:0007829" key="28">
    <source>
        <dbReference type="PDB" id="1RL1"/>
    </source>
</evidence>
<reference key="1">
    <citation type="journal article" date="1999" name="Mol. Cell">
        <title>SGT1 encodes an essential component of the yeast kinetochore assembly pathway and a novel subunit of the SCF ubiquitin ligase complex.</title>
        <authorList>
            <person name="Kitagawa K."/>
            <person name="Skowyra D."/>
            <person name="Elledge S.J."/>
            <person name="Harper J.W."/>
            <person name="Hieter P."/>
        </authorList>
    </citation>
    <scope>NUCLEOTIDE SEQUENCE [MRNA] (ISOFORM 2)</scope>
    <scope>SUBUNIT</scope>
</reference>
<reference key="2">
    <citation type="journal article" date="2003" name="DNA Seq.">
        <title>Identification of a novel splice variant: human SGT1B (SUGT1B).</title>
        <authorList>
            <person name="Niikura Y."/>
            <person name="Kitagawa K."/>
        </authorList>
    </citation>
    <scope>NUCLEOTIDE SEQUENCE [MRNA] (ISOFORM 1)</scope>
</reference>
<reference key="3">
    <citation type="journal article" date="2004" name="DNA Seq.">
        <title>Molecular cloning and characterization of SGT1.2, a novel splice variant of Homo sapiens SGT1.</title>
        <authorList>
            <person name="Zou X."/>
            <person name="Ji C."/>
            <person name="Wang L."/>
            <person name="Wu M."/>
            <person name="Zheng H."/>
            <person name="Xu J."/>
            <person name="Jin F."/>
            <person name="Gu S."/>
            <person name="Ying K."/>
            <person name="Xie Y."/>
            <person name="Mao Y."/>
        </authorList>
    </citation>
    <scope>NUCLEOTIDE SEQUENCE [MRNA] (ISOFORM 1)</scope>
    <source>
        <tissue>Brain</tissue>
    </source>
</reference>
<reference key="4">
    <citation type="thesis" date="2001" institute="University of Goettingen" country="Germany">
        <authorList>
            <person name="Schmidt T."/>
        </authorList>
    </citation>
    <scope>NUCLEOTIDE SEQUENCE [MRNA] (ISOFORM 2)</scope>
</reference>
<reference key="5">
    <citation type="submission" date="2003-08" db="EMBL/GenBank/DDBJ databases">
        <title>Cloning of human full-length CDSs in BD Creator(TM) system donor vector.</title>
        <authorList>
            <person name="Kalnine N."/>
            <person name="Chen X."/>
            <person name="Rolfs A."/>
            <person name="Halleck A."/>
            <person name="Hines L."/>
            <person name="Eisenstein S."/>
            <person name="Koundinya M."/>
            <person name="Raphael J."/>
            <person name="Moreira D."/>
            <person name="Kelley T."/>
            <person name="LaBaer J."/>
            <person name="Lin Y."/>
            <person name="Phelan M."/>
            <person name="Farmer A."/>
        </authorList>
    </citation>
    <scope>NUCLEOTIDE SEQUENCE [LARGE SCALE MRNA] (ISOFORM 2)</scope>
</reference>
<reference key="6">
    <citation type="journal article" date="2004" name="Nature">
        <title>The DNA sequence and analysis of human chromosome 13.</title>
        <authorList>
            <person name="Dunham A."/>
            <person name="Matthews L.H."/>
            <person name="Burton J."/>
            <person name="Ashurst J.L."/>
            <person name="Howe K.L."/>
            <person name="Ashcroft K.J."/>
            <person name="Beare D.M."/>
            <person name="Burford D.C."/>
            <person name="Hunt S.E."/>
            <person name="Griffiths-Jones S."/>
            <person name="Jones M.C."/>
            <person name="Keenan S.J."/>
            <person name="Oliver K."/>
            <person name="Scott C.E."/>
            <person name="Ainscough R."/>
            <person name="Almeida J.P."/>
            <person name="Ambrose K.D."/>
            <person name="Andrews D.T."/>
            <person name="Ashwell R.I.S."/>
            <person name="Babbage A.K."/>
            <person name="Bagguley C.L."/>
            <person name="Bailey J."/>
            <person name="Bannerjee R."/>
            <person name="Barlow K.F."/>
            <person name="Bates K."/>
            <person name="Beasley H."/>
            <person name="Bird C.P."/>
            <person name="Bray-Allen S."/>
            <person name="Brown A.J."/>
            <person name="Brown J.Y."/>
            <person name="Burrill W."/>
            <person name="Carder C."/>
            <person name="Carter N.P."/>
            <person name="Chapman J.C."/>
            <person name="Clamp M.E."/>
            <person name="Clark S.Y."/>
            <person name="Clarke G."/>
            <person name="Clee C.M."/>
            <person name="Clegg S.C."/>
            <person name="Cobley V."/>
            <person name="Collins J.E."/>
            <person name="Corby N."/>
            <person name="Coville G.J."/>
            <person name="Deloukas P."/>
            <person name="Dhami P."/>
            <person name="Dunham I."/>
            <person name="Dunn M."/>
            <person name="Earthrowl M.E."/>
            <person name="Ellington A.G."/>
            <person name="Faulkner L."/>
            <person name="Frankish A.G."/>
            <person name="Frankland J."/>
            <person name="French L."/>
            <person name="Garner P."/>
            <person name="Garnett J."/>
            <person name="Gilbert J.G.R."/>
            <person name="Gilson C.J."/>
            <person name="Ghori J."/>
            <person name="Grafham D.V."/>
            <person name="Gribble S.M."/>
            <person name="Griffiths C."/>
            <person name="Hall R.E."/>
            <person name="Hammond S."/>
            <person name="Harley J.L."/>
            <person name="Hart E.A."/>
            <person name="Heath P.D."/>
            <person name="Howden P.J."/>
            <person name="Huckle E.J."/>
            <person name="Hunt P.J."/>
            <person name="Hunt A.R."/>
            <person name="Johnson C."/>
            <person name="Johnson D."/>
            <person name="Kay M."/>
            <person name="Kimberley A.M."/>
            <person name="King A."/>
            <person name="Laird G.K."/>
            <person name="Langford C.J."/>
            <person name="Lawlor S."/>
            <person name="Leongamornlert D.A."/>
            <person name="Lloyd D.M."/>
            <person name="Lloyd C."/>
            <person name="Loveland J.E."/>
            <person name="Lovell J."/>
            <person name="Martin S."/>
            <person name="Mashreghi-Mohammadi M."/>
            <person name="McLaren S.J."/>
            <person name="McMurray A."/>
            <person name="Milne S."/>
            <person name="Moore M.J.F."/>
            <person name="Nickerson T."/>
            <person name="Palmer S.A."/>
            <person name="Pearce A.V."/>
            <person name="Peck A.I."/>
            <person name="Pelan S."/>
            <person name="Phillimore B."/>
            <person name="Porter K.M."/>
            <person name="Rice C.M."/>
            <person name="Searle S."/>
            <person name="Sehra H.K."/>
            <person name="Shownkeen R."/>
            <person name="Skuce C.D."/>
            <person name="Smith M."/>
            <person name="Steward C.A."/>
            <person name="Sycamore N."/>
            <person name="Tester J."/>
            <person name="Thomas D.W."/>
            <person name="Tracey A."/>
            <person name="Tromans A."/>
            <person name="Tubby B."/>
            <person name="Wall M."/>
            <person name="Wallis J.M."/>
            <person name="West A.P."/>
            <person name="Whitehead S.L."/>
            <person name="Willey D.L."/>
            <person name="Wilming L."/>
            <person name="Wray P.W."/>
            <person name="Wright M.W."/>
            <person name="Young L."/>
            <person name="Coulson A."/>
            <person name="Durbin R.M."/>
            <person name="Hubbard T."/>
            <person name="Sulston J.E."/>
            <person name="Beck S."/>
            <person name="Bentley D.R."/>
            <person name="Rogers J."/>
            <person name="Ross M.T."/>
        </authorList>
    </citation>
    <scope>NUCLEOTIDE SEQUENCE [LARGE SCALE GENOMIC DNA]</scope>
</reference>
<reference key="7">
    <citation type="submission" date="2005-07" db="EMBL/GenBank/DDBJ databases">
        <authorList>
            <person name="Mural R.J."/>
            <person name="Istrail S."/>
            <person name="Sutton G.G."/>
            <person name="Florea L."/>
            <person name="Halpern A.L."/>
            <person name="Mobarry C.M."/>
            <person name="Lippert R."/>
            <person name="Walenz B."/>
            <person name="Shatkay H."/>
            <person name="Dew I."/>
            <person name="Miller J.R."/>
            <person name="Flanigan M.J."/>
            <person name="Edwards N.J."/>
            <person name="Bolanos R."/>
            <person name="Fasulo D."/>
            <person name="Halldorsson B.V."/>
            <person name="Hannenhalli S."/>
            <person name="Turner R."/>
            <person name="Yooseph S."/>
            <person name="Lu F."/>
            <person name="Nusskern D.R."/>
            <person name="Shue B.C."/>
            <person name="Zheng X.H."/>
            <person name="Zhong F."/>
            <person name="Delcher A.L."/>
            <person name="Huson D.H."/>
            <person name="Kravitz S.A."/>
            <person name="Mouchard L."/>
            <person name="Reinert K."/>
            <person name="Remington K.A."/>
            <person name="Clark A.G."/>
            <person name="Waterman M.S."/>
            <person name="Eichler E.E."/>
            <person name="Adams M.D."/>
            <person name="Hunkapiller M.W."/>
            <person name="Myers E.W."/>
            <person name="Venter J.C."/>
        </authorList>
    </citation>
    <scope>NUCLEOTIDE SEQUENCE [LARGE SCALE GENOMIC DNA]</scope>
</reference>
<reference key="8">
    <citation type="journal article" date="2004" name="Genome Res.">
        <title>The status, quality, and expansion of the NIH full-length cDNA project: the Mammalian Gene Collection (MGC).</title>
        <authorList>
            <consortium name="The MGC Project Team"/>
        </authorList>
    </citation>
    <scope>NUCLEOTIDE SEQUENCE [LARGE SCALE MRNA] (ISOFORM 2)</scope>
    <source>
        <tissue>Cervix</tissue>
    </source>
</reference>
<reference key="9">
    <citation type="journal article" date="2003" name="Nat. Biotechnol.">
        <title>Exploring proteomes and analyzing protein processing by mass spectrometric identification of sorted N-terminal peptides.</title>
        <authorList>
            <person name="Gevaert K."/>
            <person name="Goethals M."/>
            <person name="Martens L."/>
            <person name="Van Damme J."/>
            <person name="Staes A."/>
            <person name="Thomas G.R."/>
            <person name="Vandekerckhove J."/>
        </authorList>
    </citation>
    <scope>PROTEIN SEQUENCE OF 2-13</scope>
    <source>
        <tissue>Platelet</tissue>
    </source>
</reference>
<reference key="10">
    <citation type="submission" date="2007-07" db="UniProtKB">
        <authorList>
            <person name="Bienvenut W.V."/>
            <person name="Boldt K."/>
            <person name="von Kriegsheim A.F."/>
            <person name="Kolch W."/>
        </authorList>
    </citation>
    <scope>PROTEIN SEQUENCE OF 2-13; 195-204; 222-236 AND 312-326</scope>
    <scope>CLEAVAGE OF INITIATOR METHIONINE</scope>
    <scope>ACETYLATION AT ALA-2</scope>
    <scope>IDENTIFICATION BY MASS SPECTROMETRY</scope>
    <source>
        <tissue>Hepatoma</tissue>
    </source>
</reference>
<reference key="11">
    <citation type="journal article" date="2003" name="J. Biol. Chem.">
        <title>Calcium-regulated interaction of Sgt1 with S100A6 (calcyclin) and other S100 proteins.</title>
        <authorList>
            <person name="Nowotny M."/>
            <person name="Spiechowicz M."/>
            <person name="Jastrzebska B."/>
            <person name="Filipek A."/>
            <person name="Kitagawa K."/>
            <person name="Kuznicki J."/>
        </authorList>
    </citation>
    <scope>INTERACTION WITH S100A6</scope>
</reference>
<reference key="12">
    <citation type="journal article" date="2005" name="Nat. Biotechnol.">
        <title>Immunoaffinity profiling of tyrosine phosphorylation in cancer cells.</title>
        <authorList>
            <person name="Rush J."/>
            <person name="Moritz A."/>
            <person name="Lee K.A."/>
            <person name="Guo A."/>
            <person name="Goss V.L."/>
            <person name="Spek E.J."/>
            <person name="Zhang H."/>
            <person name="Zha X.-M."/>
            <person name="Polakiewicz R.D."/>
            <person name="Comb M.J."/>
        </authorList>
    </citation>
    <scope>IDENTIFICATION BY MASS SPECTROMETRY [LARGE SCALE ANALYSIS]</scope>
</reference>
<reference key="13">
    <citation type="journal article" date="2008" name="Proc. Natl. Acad. Sci. U.S.A.">
        <title>A quantitative atlas of mitotic phosphorylation.</title>
        <authorList>
            <person name="Dephoure N."/>
            <person name="Zhou C."/>
            <person name="Villen J."/>
            <person name="Beausoleil S.A."/>
            <person name="Bakalarski C.E."/>
            <person name="Elledge S.J."/>
            <person name="Gygi S.P."/>
        </authorList>
    </citation>
    <scope>IDENTIFICATION BY MASS SPECTROMETRY [LARGE SCALE ANALYSIS]</scope>
    <source>
        <tissue>Cervix carcinoma</tissue>
    </source>
</reference>
<reference key="14">
    <citation type="journal article" date="2009" name="Anal. Chem.">
        <title>Lys-N and trypsin cover complementary parts of the phosphoproteome in a refined SCX-based approach.</title>
        <authorList>
            <person name="Gauci S."/>
            <person name="Helbig A.O."/>
            <person name="Slijper M."/>
            <person name="Krijgsveld J."/>
            <person name="Heck A.J."/>
            <person name="Mohammed S."/>
        </authorList>
    </citation>
    <scope>ACETYLATION [LARGE SCALE ANALYSIS] AT ALA-2</scope>
    <scope>CLEAVAGE OF INITIATOR METHIONINE [LARGE SCALE ANALYSIS]</scope>
    <scope>IDENTIFICATION BY MASS SPECTROMETRY [LARGE SCALE ANALYSIS]</scope>
</reference>
<reference key="15">
    <citation type="journal article" date="2010" name="Sci. Signal.">
        <title>Quantitative phosphoproteomics reveals widespread full phosphorylation site occupancy during mitosis.</title>
        <authorList>
            <person name="Olsen J.V."/>
            <person name="Vermeulen M."/>
            <person name="Santamaria A."/>
            <person name="Kumar C."/>
            <person name="Miller M.L."/>
            <person name="Jensen L.J."/>
            <person name="Gnad F."/>
            <person name="Cox J."/>
            <person name="Jensen T.S."/>
            <person name="Nigg E.A."/>
            <person name="Brunak S."/>
            <person name="Mann M."/>
        </authorList>
    </citation>
    <scope>ACETYLATION [LARGE SCALE ANALYSIS] AT ALA-2</scope>
    <scope>PHOSPHORYLATION [LARGE SCALE ANALYSIS] AT THR-265 AND SER-331</scope>
    <scope>CLEAVAGE OF INITIATOR METHIONINE [LARGE SCALE ANALYSIS]</scope>
    <scope>IDENTIFICATION BY MASS SPECTROMETRY [LARGE SCALE ANALYSIS]</scope>
    <source>
        <tissue>Cervix carcinoma</tissue>
    </source>
</reference>
<reference key="16">
    <citation type="journal article" date="2011" name="BMC Syst. Biol.">
        <title>Initial characterization of the human central proteome.</title>
        <authorList>
            <person name="Burkard T.R."/>
            <person name="Planyavsky M."/>
            <person name="Kaupe I."/>
            <person name="Breitwieser F.P."/>
            <person name="Buerckstuemmer T."/>
            <person name="Bennett K.L."/>
            <person name="Superti-Furga G."/>
            <person name="Colinge J."/>
        </authorList>
    </citation>
    <scope>IDENTIFICATION BY MASS SPECTROMETRY [LARGE SCALE ANALYSIS]</scope>
</reference>
<reference key="17">
    <citation type="journal article" date="2011" name="Int. J. Biochem. Cell Biol.">
        <title>Nuclear translocation of Sgt1 depends on its phosphorylation state.</title>
        <authorList>
            <person name="Prus W."/>
            <person name="Zabka M."/>
            <person name="Bieganowski P."/>
            <person name="Filipek A."/>
        </authorList>
    </citation>
    <scope>PHOSPHORYLATION AT SER-281 AND SER-331</scope>
    <scope>SUBCELLULAR LOCATION</scope>
    <scope>INTERACTION WITH S100A6</scope>
</reference>
<reference key="18">
    <citation type="journal article" date="2012" name="Mol. Cell. Proteomics">
        <title>Comparative large-scale characterisation of plant vs. mammal proteins reveals similar and idiosyncratic N-alpha acetylation features.</title>
        <authorList>
            <person name="Bienvenut W.V."/>
            <person name="Sumpton D."/>
            <person name="Martinez A."/>
            <person name="Lilla S."/>
            <person name="Espagne C."/>
            <person name="Meinnel T."/>
            <person name="Giglione C."/>
        </authorList>
    </citation>
    <scope>ACETYLATION [LARGE SCALE ANALYSIS] AT ALA-2</scope>
    <scope>CLEAVAGE OF INITIATOR METHIONINE [LARGE SCALE ANALYSIS]</scope>
    <scope>IDENTIFICATION BY MASS SPECTROMETRY [LARGE SCALE ANALYSIS]</scope>
</reference>
<reference key="19">
    <citation type="journal article" date="2012" name="Proc. Natl. Acad. Sci. U.S.A.">
        <title>N-terminal acetylome analyses and functional insights of the N-terminal acetyltransferase NatB.</title>
        <authorList>
            <person name="Van Damme P."/>
            <person name="Lasa M."/>
            <person name="Polevoda B."/>
            <person name="Gazquez C."/>
            <person name="Elosegui-Artola A."/>
            <person name="Kim D.S."/>
            <person name="De Juan-Pardo E."/>
            <person name="Demeyer K."/>
            <person name="Hole K."/>
            <person name="Larrea E."/>
            <person name="Timmerman E."/>
            <person name="Prieto J."/>
            <person name="Arnesen T."/>
            <person name="Sherman F."/>
            <person name="Gevaert K."/>
            <person name="Aldabe R."/>
        </authorList>
    </citation>
    <scope>ACETYLATION [LARGE SCALE ANALYSIS] AT ALA-2</scope>
    <scope>CLEAVAGE OF INITIATOR METHIONINE [LARGE SCALE ANALYSIS]</scope>
    <scope>IDENTIFICATION BY MASS SPECTROMETRY [LARGE SCALE ANALYSIS]</scope>
</reference>
<reference key="20">
    <citation type="journal article" date="2013" name="J. Proteome Res.">
        <title>Toward a comprehensive characterization of a human cancer cell phosphoproteome.</title>
        <authorList>
            <person name="Zhou H."/>
            <person name="Di Palma S."/>
            <person name="Preisinger C."/>
            <person name="Peng M."/>
            <person name="Polat A.N."/>
            <person name="Heck A.J."/>
            <person name="Mohammed S."/>
        </authorList>
    </citation>
    <scope>PHOSPHORYLATION [LARGE SCALE ANALYSIS] AT THR-265 AND THR-284</scope>
    <scope>IDENTIFICATION BY MASS SPECTROMETRY [LARGE SCALE ANALYSIS]</scope>
    <source>
        <tissue>Cervix carcinoma</tissue>
        <tissue>Erythroleukemia</tissue>
    </source>
</reference>
<reference key="21">
    <citation type="journal article" date="2014" name="J. Proteomics">
        <title>An enzyme assisted RP-RPLC approach for in-depth analysis of human liver phosphoproteome.</title>
        <authorList>
            <person name="Bian Y."/>
            <person name="Song C."/>
            <person name="Cheng K."/>
            <person name="Dong M."/>
            <person name="Wang F."/>
            <person name="Huang J."/>
            <person name="Sun D."/>
            <person name="Wang L."/>
            <person name="Ye M."/>
            <person name="Zou H."/>
        </authorList>
    </citation>
    <scope>IDENTIFICATION BY MASS SPECTROMETRY [LARGE SCALE ANALYSIS]</scope>
    <source>
        <tissue>Liver</tissue>
    </source>
</reference>
<reference key="22">
    <citation type="journal article" date="2014" name="Nat. Struct. Mol. Biol.">
        <title>Uncovering global SUMOylation signaling networks in a site-specific manner.</title>
        <authorList>
            <person name="Hendriks I.A."/>
            <person name="D'Souza R.C."/>
            <person name="Yang B."/>
            <person name="Verlaan-de Vries M."/>
            <person name="Mann M."/>
            <person name="Vertegaal A.C."/>
        </authorList>
    </citation>
    <scope>SUMOYLATION [LARGE SCALE ANALYSIS] AT LYS-295</scope>
    <scope>IDENTIFICATION BY MASS SPECTROMETRY [LARGE SCALE ANALYSIS]</scope>
</reference>
<reference key="23">
    <citation type="journal article" date="2014" name="Proc. Natl. Acad. Sci. U.S.A.">
        <title>Mapping of SUMO sites and analysis of SUMOylation changes induced by external stimuli.</title>
        <authorList>
            <person name="Impens F."/>
            <person name="Radoshevich L."/>
            <person name="Cossart P."/>
            <person name="Ribet D."/>
        </authorList>
    </citation>
    <scope>SUMOYLATION [LARGE SCALE ANALYSIS] AT LYS-295</scope>
    <scope>IDENTIFICATION BY MASS SPECTROMETRY [LARGE SCALE ANALYSIS]</scope>
</reference>
<reference key="24">
    <citation type="journal article" date="2015" name="Proteomics">
        <title>N-terminome analysis of the human mitochondrial proteome.</title>
        <authorList>
            <person name="Vaca Jacome A.S."/>
            <person name="Rabilloud T."/>
            <person name="Schaeffer-Reiss C."/>
            <person name="Rompais M."/>
            <person name="Ayoub D."/>
            <person name="Lane L."/>
            <person name="Bairoch A."/>
            <person name="Van Dorsselaer A."/>
            <person name="Carapito C."/>
        </authorList>
    </citation>
    <scope>ACETYLATION [LARGE SCALE ANALYSIS] AT ALA-2</scope>
    <scope>CLEAVAGE OF INITIATOR METHIONINE [LARGE SCALE ANALYSIS]</scope>
    <scope>IDENTIFICATION BY MASS SPECTROMETRY [LARGE SCALE ANALYSIS]</scope>
</reference>
<reference key="25">
    <citation type="journal article" date="2017" name="Nat. Struct. Mol. Biol.">
        <title>Site-specific mapping of the human SUMO proteome reveals co-modification with phosphorylation.</title>
        <authorList>
            <person name="Hendriks I.A."/>
            <person name="Lyon D."/>
            <person name="Young C."/>
            <person name="Jensen L.J."/>
            <person name="Vertegaal A.C."/>
            <person name="Nielsen M.L."/>
        </authorList>
    </citation>
    <scope>SUMOYLATION [LARGE SCALE ANALYSIS] AT LYS-295</scope>
    <scope>IDENTIFICATION BY MASS SPECTROMETRY [LARGE SCALE ANALYSIS]</scope>
</reference>
<reference key="26">
    <citation type="journal article" date="2004" name="J. Biol. Chem.">
        <title>Human Sgt1 binds HSP90 through the CHORD-Sgt1 domain and not the tetratricopeptide repeat domain.</title>
        <authorList>
            <person name="Lee Y.-T."/>
            <person name="Jacob J."/>
            <person name="Michowski W."/>
            <person name="Nowotny M."/>
            <person name="Kuznicki J."/>
            <person name="Chazin W.J."/>
        </authorList>
    </citation>
    <scope>STRUCTURE BY NMR OF 167-276</scope>
    <scope>INTERACTION WITH HSP90</scope>
</reference>